<name>RNPA_OENOB</name>
<proteinExistence type="inferred from homology"/>
<organism>
    <name type="scientific">Oenococcus oeni (strain ATCC BAA-331 / PSU-1)</name>
    <dbReference type="NCBI Taxonomy" id="203123"/>
    <lineage>
        <taxon>Bacteria</taxon>
        <taxon>Bacillati</taxon>
        <taxon>Bacillota</taxon>
        <taxon>Bacilli</taxon>
        <taxon>Lactobacillales</taxon>
        <taxon>Lactobacillaceae</taxon>
        <taxon>Oenococcus</taxon>
    </lineage>
</organism>
<accession>Q04CX7</accession>
<dbReference type="EC" id="3.1.26.5" evidence="1"/>
<dbReference type="EMBL" id="CP000411">
    <property type="protein sequence ID" value="ABJ57695.1"/>
    <property type="molecule type" value="Genomic_DNA"/>
</dbReference>
<dbReference type="RefSeq" id="WP_002817798.1">
    <property type="nucleotide sequence ID" value="NC_008528.1"/>
</dbReference>
<dbReference type="SMR" id="Q04CX7"/>
<dbReference type="STRING" id="203123.OEOE_1863"/>
<dbReference type="GeneID" id="75066782"/>
<dbReference type="KEGG" id="ooe:OEOE_1863"/>
<dbReference type="eggNOG" id="COG0594">
    <property type="taxonomic scope" value="Bacteria"/>
</dbReference>
<dbReference type="HOGENOM" id="CLU_117179_9_1_9"/>
<dbReference type="Proteomes" id="UP000000774">
    <property type="component" value="Chromosome"/>
</dbReference>
<dbReference type="GO" id="GO:0030677">
    <property type="term" value="C:ribonuclease P complex"/>
    <property type="evidence" value="ECO:0007669"/>
    <property type="project" value="TreeGrafter"/>
</dbReference>
<dbReference type="GO" id="GO:0042781">
    <property type="term" value="F:3'-tRNA processing endoribonuclease activity"/>
    <property type="evidence" value="ECO:0007669"/>
    <property type="project" value="TreeGrafter"/>
</dbReference>
<dbReference type="GO" id="GO:0004526">
    <property type="term" value="F:ribonuclease P activity"/>
    <property type="evidence" value="ECO:0007669"/>
    <property type="project" value="UniProtKB-UniRule"/>
</dbReference>
<dbReference type="GO" id="GO:0000049">
    <property type="term" value="F:tRNA binding"/>
    <property type="evidence" value="ECO:0007669"/>
    <property type="project" value="UniProtKB-UniRule"/>
</dbReference>
<dbReference type="GO" id="GO:0001682">
    <property type="term" value="P:tRNA 5'-leader removal"/>
    <property type="evidence" value="ECO:0007669"/>
    <property type="project" value="UniProtKB-UniRule"/>
</dbReference>
<dbReference type="Gene3D" id="3.30.230.10">
    <property type="match status" value="1"/>
</dbReference>
<dbReference type="HAMAP" id="MF_00227">
    <property type="entry name" value="RNase_P"/>
    <property type="match status" value="1"/>
</dbReference>
<dbReference type="InterPro" id="IPR020568">
    <property type="entry name" value="Ribosomal_Su5_D2-typ_SF"/>
</dbReference>
<dbReference type="InterPro" id="IPR014721">
    <property type="entry name" value="Ribsml_uS5_D2-typ_fold_subgr"/>
</dbReference>
<dbReference type="InterPro" id="IPR000100">
    <property type="entry name" value="RNase_P"/>
</dbReference>
<dbReference type="NCBIfam" id="TIGR00188">
    <property type="entry name" value="rnpA"/>
    <property type="match status" value="1"/>
</dbReference>
<dbReference type="PANTHER" id="PTHR33992">
    <property type="entry name" value="RIBONUCLEASE P PROTEIN COMPONENT"/>
    <property type="match status" value="1"/>
</dbReference>
<dbReference type="PANTHER" id="PTHR33992:SF1">
    <property type="entry name" value="RIBONUCLEASE P PROTEIN COMPONENT"/>
    <property type="match status" value="1"/>
</dbReference>
<dbReference type="Pfam" id="PF00825">
    <property type="entry name" value="Ribonuclease_P"/>
    <property type="match status" value="1"/>
</dbReference>
<dbReference type="SUPFAM" id="SSF54211">
    <property type="entry name" value="Ribosomal protein S5 domain 2-like"/>
    <property type="match status" value="1"/>
</dbReference>
<gene>
    <name evidence="1" type="primary">rnpA</name>
    <name type="ordered locus">OEOE_1863</name>
</gene>
<keyword id="KW-0255">Endonuclease</keyword>
<keyword id="KW-0378">Hydrolase</keyword>
<keyword id="KW-0540">Nuclease</keyword>
<keyword id="KW-1185">Reference proteome</keyword>
<keyword id="KW-0694">RNA-binding</keyword>
<keyword id="KW-0819">tRNA processing</keyword>
<sequence length="122" mass="14146">MGTKKPFRIKKTSDFQRVFAKHKSFANRYFVVYSDTQPKEVDVSHWRIGLSVSKKIGKAHERVWVKRRISESFNNISLFIPNNLDIVIVARPLVKGQKQKIIQDQLMHVLDLAGILNGKEKN</sequence>
<comment type="function">
    <text evidence="1">RNaseP catalyzes the removal of the 5'-leader sequence from pre-tRNA to produce the mature 5'-terminus. It can also cleave other RNA substrates such as 4.5S RNA. The protein component plays an auxiliary but essential role in vivo by binding to the 5'-leader sequence and broadening the substrate specificity of the ribozyme.</text>
</comment>
<comment type="catalytic activity">
    <reaction evidence="1">
        <text>Endonucleolytic cleavage of RNA, removing 5'-extranucleotides from tRNA precursor.</text>
        <dbReference type="EC" id="3.1.26.5"/>
    </reaction>
</comment>
<comment type="subunit">
    <text evidence="1">Consists of a catalytic RNA component (M1 or rnpB) and a protein subunit.</text>
</comment>
<comment type="similarity">
    <text evidence="1">Belongs to the RnpA family.</text>
</comment>
<reference key="1">
    <citation type="journal article" date="2006" name="Proc. Natl. Acad. Sci. U.S.A.">
        <title>Comparative genomics of the lactic acid bacteria.</title>
        <authorList>
            <person name="Makarova K.S."/>
            <person name="Slesarev A."/>
            <person name="Wolf Y.I."/>
            <person name="Sorokin A."/>
            <person name="Mirkin B."/>
            <person name="Koonin E.V."/>
            <person name="Pavlov A."/>
            <person name="Pavlova N."/>
            <person name="Karamychev V."/>
            <person name="Polouchine N."/>
            <person name="Shakhova V."/>
            <person name="Grigoriev I."/>
            <person name="Lou Y."/>
            <person name="Rohksar D."/>
            <person name="Lucas S."/>
            <person name="Huang K."/>
            <person name="Goodstein D.M."/>
            <person name="Hawkins T."/>
            <person name="Plengvidhya V."/>
            <person name="Welker D."/>
            <person name="Hughes J."/>
            <person name="Goh Y."/>
            <person name="Benson A."/>
            <person name="Baldwin K."/>
            <person name="Lee J.-H."/>
            <person name="Diaz-Muniz I."/>
            <person name="Dosti B."/>
            <person name="Smeianov V."/>
            <person name="Wechter W."/>
            <person name="Barabote R."/>
            <person name="Lorca G."/>
            <person name="Altermann E."/>
            <person name="Barrangou R."/>
            <person name="Ganesan B."/>
            <person name="Xie Y."/>
            <person name="Rawsthorne H."/>
            <person name="Tamir D."/>
            <person name="Parker C."/>
            <person name="Breidt F."/>
            <person name="Broadbent J.R."/>
            <person name="Hutkins R."/>
            <person name="O'Sullivan D."/>
            <person name="Steele J."/>
            <person name="Unlu G."/>
            <person name="Saier M.H. Jr."/>
            <person name="Klaenhammer T."/>
            <person name="Richardson P."/>
            <person name="Kozyavkin S."/>
            <person name="Weimer B.C."/>
            <person name="Mills D.A."/>
        </authorList>
    </citation>
    <scope>NUCLEOTIDE SEQUENCE [LARGE SCALE GENOMIC DNA]</scope>
    <source>
        <strain>ATCC BAA-331 / PSU-1</strain>
    </source>
</reference>
<protein>
    <recommendedName>
        <fullName evidence="1">Ribonuclease P protein component</fullName>
        <shortName evidence="1">RNase P protein</shortName>
        <shortName evidence="1">RNaseP protein</shortName>
        <ecNumber evidence="1">3.1.26.5</ecNumber>
    </recommendedName>
    <alternativeName>
        <fullName evidence="1">Protein C5</fullName>
    </alternativeName>
</protein>
<evidence type="ECO:0000255" key="1">
    <source>
        <dbReference type="HAMAP-Rule" id="MF_00227"/>
    </source>
</evidence>
<feature type="chain" id="PRO_1000194652" description="Ribonuclease P protein component">
    <location>
        <begin position="1"/>
        <end position="122"/>
    </location>
</feature>